<keyword id="KW-0235">DNA replication</keyword>
<keyword id="KW-0238">DNA-binding</keyword>
<keyword id="KW-0426">Late protein</keyword>
<keyword id="KW-0946">Virion</keyword>
<reference key="1">
    <citation type="submission" date="2003-03" db="EMBL/GenBank/DDBJ databases">
        <title>African swine fever virus genomes.</title>
        <authorList>
            <person name="Kutish G.F."/>
            <person name="Rock D.L."/>
        </authorList>
    </citation>
    <scope>NUCLEOTIDE SEQUENCE [LARGE SCALE GENOMIC DNA]</scope>
</reference>
<name>VHLP_ASFK5</name>
<protein>
    <recommendedName>
        <fullName>Viral histone-like protein</fullName>
    </recommendedName>
    <alternativeName>
        <fullName evidence="1">DNA-binding protein pA104R</fullName>
    </alternativeName>
    <alternativeName>
        <fullName>pA104R</fullName>
    </alternativeName>
</protein>
<evidence type="ECO:0000250" key="1">
    <source>
        <dbReference type="UniProtKB" id="P68742"/>
    </source>
</evidence>
<evidence type="ECO:0000305" key="2"/>
<accession>P0C9E5</accession>
<organismHost>
    <name type="scientific">Ornithodoros</name>
    <name type="common">relapsing fever ticks</name>
    <dbReference type="NCBI Taxonomy" id="6937"/>
</organismHost>
<organismHost>
    <name type="scientific">Phacochoerus aethiopicus</name>
    <name type="common">Warthog</name>
    <dbReference type="NCBI Taxonomy" id="85517"/>
</organismHost>
<organismHost>
    <name type="scientific">Phacochoerus africanus</name>
    <name type="common">Warthog</name>
    <dbReference type="NCBI Taxonomy" id="41426"/>
</organismHost>
<organismHost>
    <name type="scientific">Potamochoerus larvatus</name>
    <name type="common">Bushpig</name>
    <dbReference type="NCBI Taxonomy" id="273792"/>
</organismHost>
<organismHost>
    <name type="scientific">Sus scrofa</name>
    <name type="common">Pig</name>
    <dbReference type="NCBI Taxonomy" id="9823"/>
</organismHost>
<gene>
    <name type="ordered locus">Ken-047</name>
</gene>
<comment type="function">
    <text evidence="1">DNA-binding protein that plays a critical role in nucleoid compaction, genome replication and DNA replication and transcription (By similarity). Binds to both ssDNA and dsDNA with a binding site covering about 15 nucleotides (By similarity). Displays DNA-supercoiling activity only when associated with the viral DNA topoisomerase 2 (By similarity).</text>
</comment>
<comment type="activity regulation">
    <text evidence="1">Stilbene derivatives SD1 and SD4 disrupt the binding between pA104R and DNA and inhibit the viral replication in primary alveolar macrophages.</text>
</comment>
<comment type="subunit">
    <text evidence="1">Homodimer.</text>
</comment>
<comment type="subcellular location">
    <subcellularLocation>
        <location evidence="1">Virion</location>
    </subcellularLocation>
    <text evidence="1">Found in association with viral nucleoid.</text>
</comment>
<comment type="induction">
    <text evidence="1">Expressed in the late phase of the viral replicative cycle.</text>
</comment>
<comment type="miscellaneous">
    <text evidence="1">Host antibody response against A104R protein is higher in asymptomatic than in chronically infected hosts.</text>
</comment>
<comment type="similarity">
    <text evidence="2">Belongs to the bacterial histone-like protein family.</text>
</comment>
<feature type="chain" id="PRO_0000373163" description="Viral histone-like protein">
    <location>
        <begin position="1"/>
        <end position="104"/>
    </location>
</feature>
<feature type="site" description="DNA-binding" evidence="1">
    <location>
        <position position="57"/>
    </location>
</feature>
<feature type="site" description="DNA-binding" evidence="1">
    <location>
        <position position="69"/>
    </location>
</feature>
<feature type="site" description="DNA-binding" evidence="1">
    <location>
        <position position="72"/>
    </location>
</feature>
<feature type="site" description="DNA-binding" evidence="1">
    <location>
        <position position="74"/>
    </location>
</feature>
<feature type="site" description="DNA-binding" evidence="1">
    <location>
        <position position="83"/>
    </location>
</feature>
<feature type="site" description="DNA-binding" evidence="1">
    <location>
        <position position="85"/>
    </location>
</feature>
<feature type="site" description="DNA-binding" evidence="1">
    <location>
        <position position="92"/>
    </location>
</feature>
<feature type="site" description="DNA-binding" evidence="1">
    <location>
        <position position="94"/>
    </location>
</feature>
<feature type="site" description="DNA-binding" evidence="1">
    <location>
        <position position="96"/>
    </location>
</feature>
<feature type="site" description="DNA-binding" evidence="1">
    <location>
        <position position="97"/>
    </location>
</feature>
<organism>
    <name type="scientific">African swine fever virus (isolate Pig/Kenya/KEN-50/1950)</name>
    <name type="common">ASFV</name>
    <dbReference type="NCBI Taxonomy" id="561445"/>
    <lineage>
        <taxon>Viruses</taxon>
        <taxon>Varidnaviria</taxon>
        <taxon>Bamfordvirae</taxon>
        <taxon>Nucleocytoviricota</taxon>
        <taxon>Pokkesviricetes</taxon>
        <taxon>Asfuvirales</taxon>
        <taxon>Asfarviridae</taxon>
        <taxon>Asfivirus</taxon>
        <taxon>African swine fever virus</taxon>
    </lineage>
</organism>
<sequence>MSTKKKPTITKQELYSLVAADTQLNKALIERIFTSQQKIIQNALKHNQEVIIPPGIKFTVVTVKAKPARQGHNPATGEPIQIKAKPEHKAVKIRALKPVHDMLN</sequence>
<proteinExistence type="inferred from homology"/>
<dbReference type="EMBL" id="AY261360">
    <property type="status" value="NOT_ANNOTATED_CDS"/>
    <property type="molecule type" value="Genomic_DNA"/>
</dbReference>
<dbReference type="SMR" id="P0C9E5"/>
<dbReference type="Proteomes" id="UP000000861">
    <property type="component" value="Segment"/>
</dbReference>
<dbReference type="GO" id="GO:0044423">
    <property type="term" value="C:virion component"/>
    <property type="evidence" value="ECO:0007669"/>
    <property type="project" value="UniProtKB-KW"/>
</dbReference>
<dbReference type="GO" id="GO:0003677">
    <property type="term" value="F:DNA binding"/>
    <property type="evidence" value="ECO:0007669"/>
    <property type="project" value="UniProtKB-KW"/>
</dbReference>
<dbReference type="GO" id="GO:0030527">
    <property type="term" value="F:structural constituent of chromatin"/>
    <property type="evidence" value="ECO:0007669"/>
    <property type="project" value="InterPro"/>
</dbReference>
<dbReference type="GO" id="GO:0006260">
    <property type="term" value="P:DNA replication"/>
    <property type="evidence" value="ECO:0007669"/>
    <property type="project" value="UniProtKB-KW"/>
</dbReference>
<dbReference type="Gene3D" id="4.10.520.10">
    <property type="entry name" value="IHF-like DNA-binding proteins"/>
    <property type="match status" value="1"/>
</dbReference>
<dbReference type="InterPro" id="IPR000119">
    <property type="entry name" value="Hist_DNA-bd"/>
</dbReference>
<dbReference type="InterPro" id="IPR020816">
    <property type="entry name" value="Histone-like_DNA-bd_CS"/>
</dbReference>
<dbReference type="InterPro" id="IPR010992">
    <property type="entry name" value="IHF-like_DNA-bd_dom_sf"/>
</dbReference>
<dbReference type="PANTHER" id="PTHR33175">
    <property type="entry name" value="DNA-BINDING PROTEIN HU"/>
    <property type="match status" value="1"/>
</dbReference>
<dbReference type="PANTHER" id="PTHR33175:SF13">
    <property type="entry name" value="HISTONE-LIKE PROTEIN"/>
    <property type="match status" value="1"/>
</dbReference>
<dbReference type="Pfam" id="PF00216">
    <property type="entry name" value="Bac_DNA_binding"/>
    <property type="match status" value="1"/>
</dbReference>
<dbReference type="SMART" id="SM00411">
    <property type="entry name" value="BHL"/>
    <property type="match status" value="1"/>
</dbReference>
<dbReference type="SUPFAM" id="SSF47729">
    <property type="entry name" value="IHF-like DNA-binding proteins"/>
    <property type="match status" value="1"/>
</dbReference>
<dbReference type="PROSITE" id="PS00045">
    <property type="entry name" value="HISTONE_LIKE"/>
    <property type="match status" value="1"/>
</dbReference>